<feature type="chain" id="PRO_0000308225" description="Squamosa promoter-binding-like protein 3">
    <location>
        <begin position="1"/>
        <end position="469"/>
    </location>
</feature>
<feature type="zinc finger region" description="SBP-type" evidence="3">
    <location>
        <begin position="179"/>
        <end position="256"/>
    </location>
</feature>
<feature type="region of interest" description="Disordered" evidence="4">
    <location>
        <begin position="96"/>
        <end position="118"/>
    </location>
</feature>
<feature type="region of interest" description="Disordered" evidence="4">
    <location>
        <begin position="446"/>
        <end position="469"/>
    </location>
</feature>
<feature type="short sequence motif" description="Bipartite nuclear localization signal" evidence="2">
    <location>
        <begin position="239"/>
        <end position="255"/>
    </location>
</feature>
<feature type="compositionally biased region" description="Basic and acidic residues" evidence="4">
    <location>
        <begin position="97"/>
        <end position="115"/>
    </location>
</feature>
<feature type="compositionally biased region" description="Polar residues" evidence="4">
    <location>
        <begin position="460"/>
        <end position="469"/>
    </location>
</feature>
<feature type="binding site" evidence="3">
    <location>
        <position position="182"/>
    </location>
    <ligand>
        <name>Zn(2+)</name>
        <dbReference type="ChEBI" id="CHEBI:29105"/>
        <label>1</label>
    </ligand>
</feature>
<feature type="binding site" evidence="3">
    <location>
        <position position="187"/>
    </location>
    <ligand>
        <name>Zn(2+)</name>
        <dbReference type="ChEBI" id="CHEBI:29105"/>
        <label>1</label>
    </ligand>
</feature>
<feature type="binding site" evidence="3">
    <location>
        <position position="204"/>
    </location>
    <ligand>
        <name>Zn(2+)</name>
        <dbReference type="ChEBI" id="CHEBI:29105"/>
        <label>1</label>
    </ligand>
</feature>
<feature type="binding site" evidence="3">
    <location>
        <position position="207"/>
    </location>
    <ligand>
        <name>Zn(2+)</name>
        <dbReference type="ChEBI" id="CHEBI:29105"/>
        <label>1</label>
    </ligand>
</feature>
<feature type="binding site" evidence="3">
    <location>
        <position position="223"/>
    </location>
    <ligand>
        <name>Zn(2+)</name>
        <dbReference type="ChEBI" id="CHEBI:29105"/>
        <label>2</label>
    </ligand>
</feature>
<feature type="binding site" evidence="3">
    <location>
        <position position="226"/>
    </location>
    <ligand>
        <name>Zn(2+)</name>
        <dbReference type="ChEBI" id="CHEBI:29105"/>
        <label>2</label>
    </ligand>
</feature>
<feature type="binding site" evidence="3">
    <location>
        <position position="230"/>
    </location>
    <ligand>
        <name>Zn(2+)</name>
        <dbReference type="ChEBI" id="CHEBI:29105"/>
        <label>2</label>
    </ligand>
</feature>
<feature type="binding site" evidence="3">
    <location>
        <position position="242"/>
    </location>
    <ligand>
        <name>Zn(2+)</name>
        <dbReference type="ChEBI" id="CHEBI:29105"/>
        <label>2</label>
    </ligand>
</feature>
<protein>
    <recommendedName>
        <fullName>Squamosa promoter-binding-like protein 3</fullName>
    </recommendedName>
</protein>
<gene>
    <name type="primary">SPL3</name>
    <name type="ordered locus">Os02g0139400</name>
    <name type="ordered locus">LOC_Os02g04680</name>
    <name type="ORF">OJ1679_B08.6</name>
    <name type="ORF">OsJ_005170</name>
    <name type="ORF">OSJNBa0026E05.40</name>
</gene>
<sequence length="469" mass="50265">MGSFGMDWNQKSSVLWDWENMPPIGNSANENPKNVMLAESKLAGVGVDIGHESGHSSGGTFSSSSEIGYGSSKSSISASIDSPSKVGNTIELNFASAEEHDKNMDKGKSKVDDTGTSRSPVVAANRVEPLIGLKLGKRTYFEDVCGGQNVKSSPSGVSVATPSPGLAKKVKVAQQNTQNPHCQVEGCNVDLSSAKPYHRKHRVCEPHSKTLKVIVAGLERRFCQQCSRFHGLAEFDQKKRSCRRRLHDHNARRRKPQPEAISLSSSRLSTLLYGDARQQASFLFGQAPYGQMGSCASSWDNPVPGGFKFTATKAPWSRPTIAAGVDGTHVSNQQASGNVLPHGAHHSFDGLMAFKETNAKVLNQGMEASAVASGSARGPDFEHALSLLSIDSVGAANLQPGSQIHPGVTAIAGTSNPVMMPSPAIWQGGLSLDQQAQFQAFDRLGNDDDEDHLQLPKPSYDNSHYDQMN</sequence>
<proteinExistence type="evidence at transcript level"/>
<keyword id="KW-0238">DNA-binding</keyword>
<keyword id="KW-0479">Metal-binding</keyword>
<keyword id="KW-0539">Nucleus</keyword>
<keyword id="KW-1185">Reference proteome</keyword>
<keyword id="KW-0804">Transcription</keyword>
<keyword id="KW-0805">Transcription regulation</keyword>
<keyword id="KW-0862">Zinc</keyword>
<keyword id="KW-0863">Zinc-finger</keyword>
<accession>A3A2Z8</accession>
<accession>Q6YXZ5</accession>
<comment type="function">
    <text evidence="1">Trans-acting factor that binds specifically to the consensus nucleotide sequence 5'-TNCGTACAA-3' (By similarity). May be involved in panicle development.</text>
</comment>
<comment type="subcellular location">
    <subcellularLocation>
        <location evidence="6">Nucleus</location>
    </subcellularLocation>
</comment>
<comment type="tissue specificity">
    <text evidence="5">Ubiquitous.</text>
</comment>
<comment type="domain">
    <text evidence="1">The SBP-type zinc finger is required for the binding to DNA.</text>
</comment>
<comment type="sequence caution" evidence="6">
    <conflict type="erroneous gene model prediction">
        <sequence resource="EMBL-CDS" id="BAD10252"/>
    </conflict>
</comment>
<comment type="sequence caution" evidence="6">
    <conflict type="erroneous gene model prediction">
        <sequence resource="EMBL-CDS" id="BAD10545"/>
    </conflict>
</comment>
<name>SPL3_ORYSJ</name>
<evidence type="ECO:0000250" key="1"/>
<evidence type="ECO:0000255" key="2"/>
<evidence type="ECO:0000255" key="3">
    <source>
        <dbReference type="PROSITE-ProRule" id="PRU00470"/>
    </source>
</evidence>
<evidence type="ECO:0000256" key="4">
    <source>
        <dbReference type="SAM" id="MobiDB-lite"/>
    </source>
</evidence>
<evidence type="ECO:0000269" key="5">
    <source>
    </source>
</evidence>
<evidence type="ECO:0000305" key="6"/>
<reference key="1">
    <citation type="journal article" date="2005" name="Nature">
        <title>The map-based sequence of the rice genome.</title>
        <authorList>
            <consortium name="International rice genome sequencing project (IRGSP)"/>
        </authorList>
    </citation>
    <scope>NUCLEOTIDE SEQUENCE [LARGE SCALE GENOMIC DNA]</scope>
    <source>
        <strain>cv. Nipponbare</strain>
    </source>
</reference>
<reference key="2">
    <citation type="journal article" date="2013" name="Rice">
        <title>Improvement of the Oryza sativa Nipponbare reference genome using next generation sequence and optical map data.</title>
        <authorList>
            <person name="Kawahara Y."/>
            <person name="de la Bastide M."/>
            <person name="Hamilton J.P."/>
            <person name="Kanamori H."/>
            <person name="McCombie W.R."/>
            <person name="Ouyang S."/>
            <person name="Schwartz D.C."/>
            <person name="Tanaka T."/>
            <person name="Wu J."/>
            <person name="Zhou S."/>
            <person name="Childs K.L."/>
            <person name="Davidson R.M."/>
            <person name="Lin H."/>
            <person name="Quesada-Ocampo L."/>
            <person name="Vaillancourt B."/>
            <person name="Sakai H."/>
            <person name="Lee S.S."/>
            <person name="Kim J."/>
            <person name="Numa H."/>
            <person name="Itoh T."/>
            <person name="Buell C.R."/>
            <person name="Matsumoto T."/>
        </authorList>
    </citation>
    <scope>GENOME REANNOTATION</scope>
    <source>
        <strain>cv. Nipponbare</strain>
    </source>
</reference>
<reference key="3">
    <citation type="journal article" date="2005" name="PLoS Biol.">
        <title>The genomes of Oryza sativa: a history of duplications.</title>
        <authorList>
            <person name="Yu J."/>
            <person name="Wang J."/>
            <person name="Lin W."/>
            <person name="Li S."/>
            <person name="Li H."/>
            <person name="Zhou J."/>
            <person name="Ni P."/>
            <person name="Dong W."/>
            <person name="Hu S."/>
            <person name="Zeng C."/>
            <person name="Zhang J."/>
            <person name="Zhang Y."/>
            <person name="Li R."/>
            <person name="Xu Z."/>
            <person name="Li S."/>
            <person name="Li X."/>
            <person name="Zheng H."/>
            <person name="Cong L."/>
            <person name="Lin L."/>
            <person name="Yin J."/>
            <person name="Geng J."/>
            <person name="Li G."/>
            <person name="Shi J."/>
            <person name="Liu J."/>
            <person name="Lv H."/>
            <person name="Li J."/>
            <person name="Wang J."/>
            <person name="Deng Y."/>
            <person name="Ran L."/>
            <person name="Shi X."/>
            <person name="Wang X."/>
            <person name="Wu Q."/>
            <person name="Li C."/>
            <person name="Ren X."/>
            <person name="Wang J."/>
            <person name="Wang X."/>
            <person name="Li D."/>
            <person name="Liu D."/>
            <person name="Zhang X."/>
            <person name="Ji Z."/>
            <person name="Zhao W."/>
            <person name="Sun Y."/>
            <person name="Zhang Z."/>
            <person name="Bao J."/>
            <person name="Han Y."/>
            <person name="Dong L."/>
            <person name="Ji J."/>
            <person name="Chen P."/>
            <person name="Wu S."/>
            <person name="Liu J."/>
            <person name="Xiao Y."/>
            <person name="Bu D."/>
            <person name="Tan J."/>
            <person name="Yang L."/>
            <person name="Ye C."/>
            <person name="Zhang J."/>
            <person name="Xu J."/>
            <person name="Zhou Y."/>
            <person name="Yu Y."/>
            <person name="Zhang B."/>
            <person name="Zhuang S."/>
            <person name="Wei H."/>
            <person name="Liu B."/>
            <person name="Lei M."/>
            <person name="Yu H."/>
            <person name="Li Y."/>
            <person name="Xu H."/>
            <person name="Wei S."/>
            <person name="He X."/>
            <person name="Fang L."/>
            <person name="Zhang Z."/>
            <person name="Zhang Y."/>
            <person name="Huang X."/>
            <person name="Su Z."/>
            <person name="Tong W."/>
            <person name="Li J."/>
            <person name="Tong Z."/>
            <person name="Li S."/>
            <person name="Ye J."/>
            <person name="Wang L."/>
            <person name="Fang L."/>
            <person name="Lei T."/>
            <person name="Chen C.-S."/>
            <person name="Chen H.-C."/>
            <person name="Xu Z."/>
            <person name="Li H."/>
            <person name="Huang H."/>
            <person name="Zhang F."/>
            <person name="Xu H."/>
            <person name="Li N."/>
            <person name="Zhao C."/>
            <person name="Li S."/>
            <person name="Dong L."/>
            <person name="Huang Y."/>
            <person name="Li L."/>
            <person name="Xi Y."/>
            <person name="Qi Q."/>
            <person name="Li W."/>
            <person name="Zhang B."/>
            <person name="Hu W."/>
            <person name="Zhang Y."/>
            <person name="Tian X."/>
            <person name="Jiao Y."/>
            <person name="Liang X."/>
            <person name="Jin J."/>
            <person name="Gao L."/>
            <person name="Zheng W."/>
            <person name="Hao B."/>
            <person name="Liu S.-M."/>
            <person name="Wang W."/>
            <person name="Yuan L."/>
            <person name="Cao M."/>
            <person name="McDermott J."/>
            <person name="Samudrala R."/>
            <person name="Wang J."/>
            <person name="Wong G.K.-S."/>
            <person name="Yang H."/>
        </authorList>
    </citation>
    <scope>NUCLEOTIDE SEQUENCE [LARGE SCALE GENOMIC DNA]</scope>
    <source>
        <strain>cv. Nipponbare</strain>
    </source>
</reference>
<reference key="4">
    <citation type="journal article" date="2006" name="Plant Physiol.">
        <title>Genomic organization, differential expression, and interaction of SQUAMOSA promoter-binding-like transcription factors and microRNA156 in rice.</title>
        <authorList>
            <person name="Xie K."/>
            <person name="Wu C."/>
            <person name="Xiong L."/>
        </authorList>
    </citation>
    <scope>TISSUE SPECIFICITY</scope>
    <scope>GENE FAMILY</scope>
    <scope>NOMENCLATURE</scope>
</reference>
<reference key="5">
    <citation type="journal article" date="2008" name="Gene">
        <title>Comparative study of SBP-box gene family in Arabidopsis and rice.</title>
        <authorList>
            <person name="Yang Z."/>
            <person name="Wang X."/>
            <person name="Gu S."/>
            <person name="Hu Z."/>
            <person name="Xu H."/>
            <person name="Xu C."/>
        </authorList>
    </citation>
    <scope>GENE FAMILY</scope>
</reference>
<organism>
    <name type="scientific">Oryza sativa subsp. japonica</name>
    <name type="common">Rice</name>
    <dbReference type="NCBI Taxonomy" id="39947"/>
    <lineage>
        <taxon>Eukaryota</taxon>
        <taxon>Viridiplantae</taxon>
        <taxon>Streptophyta</taxon>
        <taxon>Embryophyta</taxon>
        <taxon>Tracheophyta</taxon>
        <taxon>Spermatophyta</taxon>
        <taxon>Magnoliopsida</taxon>
        <taxon>Liliopsida</taxon>
        <taxon>Poales</taxon>
        <taxon>Poaceae</taxon>
        <taxon>BOP clade</taxon>
        <taxon>Oryzoideae</taxon>
        <taxon>Oryzeae</taxon>
        <taxon>Oryzinae</taxon>
        <taxon>Oryza</taxon>
        <taxon>Oryza sativa</taxon>
    </lineage>
</organism>
<dbReference type="EMBL" id="AP005294">
    <property type="protein sequence ID" value="BAD10252.1"/>
    <property type="status" value="ALT_SEQ"/>
    <property type="molecule type" value="Genomic_DNA"/>
</dbReference>
<dbReference type="EMBL" id="AP005647">
    <property type="protein sequence ID" value="BAD10545.1"/>
    <property type="status" value="ALT_SEQ"/>
    <property type="molecule type" value="Genomic_DNA"/>
</dbReference>
<dbReference type="EMBL" id="AP014958">
    <property type="status" value="NOT_ANNOTATED_CDS"/>
    <property type="molecule type" value="Genomic_DNA"/>
</dbReference>
<dbReference type="EMBL" id="CM000139">
    <property type="protein sequence ID" value="EAZ21687.1"/>
    <property type="molecule type" value="Genomic_DNA"/>
</dbReference>
<dbReference type="RefSeq" id="XP_015626879.1">
    <property type="nucleotide sequence ID" value="XM_015771393.1"/>
</dbReference>
<dbReference type="RefSeq" id="XP_015626880.1">
    <property type="nucleotide sequence ID" value="XM_015771394.1"/>
</dbReference>
<dbReference type="RefSeq" id="XP_015626881.1">
    <property type="nucleotide sequence ID" value="XM_015771395.1"/>
</dbReference>
<dbReference type="RefSeq" id="XP_015626882.1">
    <property type="nucleotide sequence ID" value="XM_015771396.1"/>
</dbReference>
<dbReference type="RefSeq" id="XP_015626883.1">
    <property type="nucleotide sequence ID" value="XM_015771397.1"/>
</dbReference>
<dbReference type="RefSeq" id="XP_015626884.1">
    <property type="nucleotide sequence ID" value="XM_015771398.1"/>
</dbReference>
<dbReference type="SMR" id="A3A2Z8"/>
<dbReference type="FunCoup" id="A3A2Z8">
    <property type="interactions" value="975"/>
</dbReference>
<dbReference type="STRING" id="39947.A3A2Z8"/>
<dbReference type="PaxDb" id="39947-A3A2Z8"/>
<dbReference type="EnsemblPlants" id="Os02t0139400-02">
    <property type="protein sequence ID" value="Os02t0139400-02"/>
    <property type="gene ID" value="Os02g0139400"/>
</dbReference>
<dbReference type="GeneID" id="9270639"/>
<dbReference type="Gramene" id="Os02t0139400-02">
    <property type="protein sequence ID" value="Os02t0139400-02"/>
    <property type="gene ID" value="Os02g0139400"/>
</dbReference>
<dbReference type="KEGG" id="osa:9270639"/>
<dbReference type="eggNOG" id="ENOG502QTXG">
    <property type="taxonomic scope" value="Eukaryota"/>
</dbReference>
<dbReference type="HOGENOM" id="CLU_026055_1_0_1"/>
<dbReference type="InParanoid" id="A3A2Z8"/>
<dbReference type="OrthoDB" id="514967at2759"/>
<dbReference type="Proteomes" id="UP000000763">
    <property type="component" value="Chromosome 2"/>
</dbReference>
<dbReference type="Proteomes" id="UP000007752">
    <property type="component" value="Chromosome 2"/>
</dbReference>
<dbReference type="Proteomes" id="UP000059680">
    <property type="component" value="Chromosome 2"/>
</dbReference>
<dbReference type="GO" id="GO:0005634">
    <property type="term" value="C:nucleus"/>
    <property type="evidence" value="ECO:0007669"/>
    <property type="project" value="UniProtKB-SubCell"/>
</dbReference>
<dbReference type="GO" id="GO:0003677">
    <property type="term" value="F:DNA binding"/>
    <property type="evidence" value="ECO:0007669"/>
    <property type="project" value="UniProtKB-KW"/>
</dbReference>
<dbReference type="GO" id="GO:0008270">
    <property type="term" value="F:zinc ion binding"/>
    <property type="evidence" value="ECO:0007669"/>
    <property type="project" value="UniProtKB-KW"/>
</dbReference>
<dbReference type="FunFam" id="4.10.1100.10:FF:000001">
    <property type="entry name" value="Squamosa promoter-binding-like protein 14"/>
    <property type="match status" value="1"/>
</dbReference>
<dbReference type="Gene3D" id="4.10.1100.10">
    <property type="entry name" value="Transcription factor, SBP-box domain"/>
    <property type="match status" value="1"/>
</dbReference>
<dbReference type="InterPro" id="IPR044817">
    <property type="entry name" value="SBP-like"/>
</dbReference>
<dbReference type="InterPro" id="IPR004333">
    <property type="entry name" value="SBP_dom"/>
</dbReference>
<dbReference type="InterPro" id="IPR036893">
    <property type="entry name" value="SBP_sf"/>
</dbReference>
<dbReference type="PANTHER" id="PTHR31251:SF74">
    <property type="entry name" value="SQUAMOSA PROMOTER-BINDING-LIKE PROTEIN 2"/>
    <property type="match status" value="1"/>
</dbReference>
<dbReference type="PANTHER" id="PTHR31251">
    <property type="entry name" value="SQUAMOSA PROMOTER-BINDING-LIKE PROTEIN 4"/>
    <property type="match status" value="1"/>
</dbReference>
<dbReference type="Pfam" id="PF03110">
    <property type="entry name" value="SBP"/>
    <property type="match status" value="1"/>
</dbReference>
<dbReference type="SUPFAM" id="SSF103612">
    <property type="entry name" value="SBT domain"/>
    <property type="match status" value="1"/>
</dbReference>
<dbReference type="PROSITE" id="PS51141">
    <property type="entry name" value="ZF_SBP"/>
    <property type="match status" value="1"/>
</dbReference>